<accession>C1DAV4</accession>
<proteinExistence type="inferred from homology"/>
<sequence>MKLAKTRFRPAPRELDLNIDYRVAATGLPRPSDFARWVGAALQGRSRPAQIGLHVVDNAEGQRLNAEYRGKDSATNVLSFALNEGEEAVAGLPLMGDIVLAAEVVAREAAEQGKDLHAHYAHLTVHGMLHLQGHDHETDTEAEAMEALETVILARLGYTDPYAVEH</sequence>
<keyword id="KW-0963">Cytoplasm</keyword>
<keyword id="KW-0255">Endonuclease</keyword>
<keyword id="KW-0378">Hydrolase</keyword>
<keyword id="KW-0479">Metal-binding</keyword>
<keyword id="KW-0540">Nuclease</keyword>
<keyword id="KW-1185">Reference proteome</keyword>
<keyword id="KW-0690">Ribosome biogenesis</keyword>
<keyword id="KW-0698">rRNA processing</keyword>
<keyword id="KW-0862">Zinc</keyword>
<comment type="function">
    <text evidence="1">Single strand-specific metallo-endoribonuclease involved in late-stage 70S ribosome quality control and in maturation of the 3' terminus of the 16S rRNA.</text>
</comment>
<comment type="cofactor">
    <cofactor evidence="1">
        <name>Zn(2+)</name>
        <dbReference type="ChEBI" id="CHEBI:29105"/>
    </cofactor>
    <text evidence="1">Binds 1 zinc ion.</text>
</comment>
<comment type="subcellular location">
    <subcellularLocation>
        <location evidence="1">Cytoplasm</location>
    </subcellularLocation>
</comment>
<comment type="similarity">
    <text evidence="1">Belongs to the endoribonuclease YbeY family.</text>
</comment>
<protein>
    <recommendedName>
        <fullName evidence="1">Endoribonuclease YbeY</fullName>
        <ecNumber evidence="1">3.1.-.-</ecNumber>
    </recommendedName>
</protein>
<dbReference type="EC" id="3.1.-.-" evidence="1"/>
<dbReference type="EMBL" id="CP001154">
    <property type="protein sequence ID" value="ACO73285.1"/>
    <property type="molecule type" value="Genomic_DNA"/>
</dbReference>
<dbReference type="RefSeq" id="WP_012695779.1">
    <property type="nucleotide sequence ID" value="NC_012559.1"/>
</dbReference>
<dbReference type="SMR" id="C1DAV4"/>
<dbReference type="STRING" id="557598.LHK_00290"/>
<dbReference type="KEGG" id="lhk:LHK_00290"/>
<dbReference type="eggNOG" id="COG0319">
    <property type="taxonomic scope" value="Bacteria"/>
</dbReference>
<dbReference type="HOGENOM" id="CLU_106710_0_1_4"/>
<dbReference type="Proteomes" id="UP000002010">
    <property type="component" value="Chromosome"/>
</dbReference>
<dbReference type="GO" id="GO:0005737">
    <property type="term" value="C:cytoplasm"/>
    <property type="evidence" value="ECO:0007669"/>
    <property type="project" value="UniProtKB-SubCell"/>
</dbReference>
<dbReference type="GO" id="GO:0004222">
    <property type="term" value="F:metalloendopeptidase activity"/>
    <property type="evidence" value="ECO:0007669"/>
    <property type="project" value="InterPro"/>
</dbReference>
<dbReference type="GO" id="GO:0004521">
    <property type="term" value="F:RNA endonuclease activity"/>
    <property type="evidence" value="ECO:0007669"/>
    <property type="project" value="UniProtKB-UniRule"/>
</dbReference>
<dbReference type="GO" id="GO:0008270">
    <property type="term" value="F:zinc ion binding"/>
    <property type="evidence" value="ECO:0007669"/>
    <property type="project" value="UniProtKB-UniRule"/>
</dbReference>
<dbReference type="GO" id="GO:0006364">
    <property type="term" value="P:rRNA processing"/>
    <property type="evidence" value="ECO:0007669"/>
    <property type="project" value="UniProtKB-UniRule"/>
</dbReference>
<dbReference type="Gene3D" id="3.40.390.30">
    <property type="entry name" value="Metalloproteases ('zincins'), catalytic domain"/>
    <property type="match status" value="1"/>
</dbReference>
<dbReference type="HAMAP" id="MF_00009">
    <property type="entry name" value="Endoribonucl_YbeY"/>
    <property type="match status" value="1"/>
</dbReference>
<dbReference type="InterPro" id="IPR023091">
    <property type="entry name" value="MetalPrtase_cat_dom_sf_prd"/>
</dbReference>
<dbReference type="InterPro" id="IPR002036">
    <property type="entry name" value="YbeY"/>
</dbReference>
<dbReference type="InterPro" id="IPR020549">
    <property type="entry name" value="YbeY_CS"/>
</dbReference>
<dbReference type="NCBIfam" id="TIGR00043">
    <property type="entry name" value="rRNA maturation RNase YbeY"/>
    <property type="match status" value="1"/>
</dbReference>
<dbReference type="PANTHER" id="PTHR46986">
    <property type="entry name" value="ENDORIBONUCLEASE YBEY, CHLOROPLASTIC"/>
    <property type="match status" value="1"/>
</dbReference>
<dbReference type="PANTHER" id="PTHR46986:SF1">
    <property type="entry name" value="ENDORIBONUCLEASE YBEY, CHLOROPLASTIC"/>
    <property type="match status" value="1"/>
</dbReference>
<dbReference type="Pfam" id="PF02130">
    <property type="entry name" value="YbeY"/>
    <property type="match status" value="1"/>
</dbReference>
<dbReference type="SUPFAM" id="SSF55486">
    <property type="entry name" value="Metalloproteases ('zincins'), catalytic domain"/>
    <property type="match status" value="1"/>
</dbReference>
<dbReference type="PROSITE" id="PS01306">
    <property type="entry name" value="UPF0054"/>
    <property type="match status" value="1"/>
</dbReference>
<name>YBEY_LARHH</name>
<feature type="chain" id="PRO_1000199980" description="Endoribonuclease YbeY">
    <location>
        <begin position="1"/>
        <end position="166"/>
    </location>
</feature>
<feature type="binding site" evidence="1">
    <location>
        <position position="126"/>
    </location>
    <ligand>
        <name>Zn(2+)</name>
        <dbReference type="ChEBI" id="CHEBI:29105"/>
        <note>catalytic</note>
    </ligand>
</feature>
<feature type="binding site" evidence="1">
    <location>
        <position position="130"/>
    </location>
    <ligand>
        <name>Zn(2+)</name>
        <dbReference type="ChEBI" id="CHEBI:29105"/>
        <note>catalytic</note>
    </ligand>
</feature>
<feature type="binding site" evidence="1">
    <location>
        <position position="136"/>
    </location>
    <ligand>
        <name>Zn(2+)</name>
        <dbReference type="ChEBI" id="CHEBI:29105"/>
        <note>catalytic</note>
    </ligand>
</feature>
<evidence type="ECO:0000255" key="1">
    <source>
        <dbReference type="HAMAP-Rule" id="MF_00009"/>
    </source>
</evidence>
<gene>
    <name evidence="1" type="primary">ybeY</name>
    <name type="ordered locus">LHK_00290</name>
</gene>
<organism>
    <name type="scientific">Laribacter hongkongensis (strain HLHK9)</name>
    <dbReference type="NCBI Taxonomy" id="557598"/>
    <lineage>
        <taxon>Bacteria</taxon>
        <taxon>Pseudomonadati</taxon>
        <taxon>Pseudomonadota</taxon>
        <taxon>Betaproteobacteria</taxon>
        <taxon>Neisseriales</taxon>
        <taxon>Aquaspirillaceae</taxon>
        <taxon>Laribacter</taxon>
    </lineage>
</organism>
<reference key="1">
    <citation type="journal article" date="2009" name="PLoS Genet.">
        <title>The complete genome and proteome of Laribacter hongkongensis reveal potential mechanisms for adaptations to different temperatures and habitats.</title>
        <authorList>
            <person name="Woo P.C.Y."/>
            <person name="Lau S.K.P."/>
            <person name="Tse H."/>
            <person name="Teng J.L.L."/>
            <person name="Curreem S.O."/>
            <person name="Tsang A.K.L."/>
            <person name="Fan R.Y.Y."/>
            <person name="Wong G.K.M."/>
            <person name="Huang Y."/>
            <person name="Loman N.J."/>
            <person name="Snyder L.A.S."/>
            <person name="Cai J.J."/>
            <person name="Huang J.-D."/>
            <person name="Mak W."/>
            <person name="Pallen M.J."/>
            <person name="Lok S."/>
            <person name="Yuen K.-Y."/>
        </authorList>
    </citation>
    <scope>NUCLEOTIDE SEQUENCE [LARGE SCALE GENOMIC DNA]</scope>
    <source>
        <strain>HLHK9</strain>
    </source>
</reference>